<accession>A2Z734</accession>
<accession>A7UMR7</accession>
<evidence type="ECO:0000250" key="1"/>
<evidence type="ECO:0000255" key="2">
    <source>
        <dbReference type="PROSITE-ProRule" id="PRU00108"/>
    </source>
</evidence>
<evidence type="ECO:0000256" key="3">
    <source>
        <dbReference type="SAM" id="MobiDB-lite"/>
    </source>
</evidence>
<evidence type="ECO:0000269" key="4">
    <source>
    </source>
</evidence>
<evidence type="ECO:0000305" key="5"/>
<name>HOX23_ORYSI</name>
<comment type="function">
    <text evidence="1">Probable transcription factor.</text>
</comment>
<comment type="subcellular location">
    <subcellularLocation>
        <location evidence="5">Nucleus</location>
    </subcellularLocation>
</comment>
<comment type="tissue specificity">
    <text evidence="4">Expressed in seedlings, roots, stems, leaf sheaths and panicles.</text>
</comment>
<comment type="similarity">
    <text evidence="5">Belongs to the HD-ZIP homeobox family. Class I subfamily.</text>
</comment>
<gene>
    <name type="primary">HOX23</name>
    <name type="ORF">OsI_032377</name>
</gene>
<sequence>MASNGAAAGAMAPFFPPNFLLQMQQPLPLHHQHLQDHAHGGHGGHHLLPPPPPSLSPFLPDLAMDAPPPPMYEASGGDGGGGGAASEDEEDGCGGGGGGGGGEKKRRLSVEQVRTLERSFESGNKLEPERKAQLARALGLQPRQVAIWFQNRRARWKTKQLEKDFDALRRQLDAARAENDALLSLNSKLHAEIVALKGGAAAAGGGGSSCRQEAASELINLNVKETEASCSNRSENSSEINLDISRPAPPPPPPPANESPVNRGIPFYASIGRGGAGGVDIDQLLLRGGHSPSPAAVTTPPPPKMELGITGNGGGADAAAAGAGSFGGLLCGAVDEQPPFWPWADGHHHFH</sequence>
<organism>
    <name type="scientific">Oryza sativa subsp. indica</name>
    <name type="common">Rice</name>
    <dbReference type="NCBI Taxonomy" id="39946"/>
    <lineage>
        <taxon>Eukaryota</taxon>
        <taxon>Viridiplantae</taxon>
        <taxon>Streptophyta</taxon>
        <taxon>Embryophyta</taxon>
        <taxon>Tracheophyta</taxon>
        <taxon>Spermatophyta</taxon>
        <taxon>Magnoliopsida</taxon>
        <taxon>Liliopsida</taxon>
        <taxon>Poales</taxon>
        <taxon>Poaceae</taxon>
        <taxon>BOP clade</taxon>
        <taxon>Oryzoideae</taxon>
        <taxon>Oryzeae</taxon>
        <taxon>Oryzinae</taxon>
        <taxon>Oryza</taxon>
        <taxon>Oryza sativa</taxon>
    </lineage>
</organism>
<reference key="1">
    <citation type="journal article" date="2005" name="PLoS Biol.">
        <title>The genomes of Oryza sativa: a history of duplications.</title>
        <authorList>
            <person name="Yu J."/>
            <person name="Wang J."/>
            <person name="Lin W."/>
            <person name="Li S."/>
            <person name="Li H."/>
            <person name="Zhou J."/>
            <person name="Ni P."/>
            <person name="Dong W."/>
            <person name="Hu S."/>
            <person name="Zeng C."/>
            <person name="Zhang J."/>
            <person name="Zhang Y."/>
            <person name="Li R."/>
            <person name="Xu Z."/>
            <person name="Li S."/>
            <person name="Li X."/>
            <person name="Zheng H."/>
            <person name="Cong L."/>
            <person name="Lin L."/>
            <person name="Yin J."/>
            <person name="Geng J."/>
            <person name="Li G."/>
            <person name="Shi J."/>
            <person name="Liu J."/>
            <person name="Lv H."/>
            <person name="Li J."/>
            <person name="Wang J."/>
            <person name="Deng Y."/>
            <person name="Ran L."/>
            <person name="Shi X."/>
            <person name="Wang X."/>
            <person name="Wu Q."/>
            <person name="Li C."/>
            <person name="Ren X."/>
            <person name="Wang J."/>
            <person name="Wang X."/>
            <person name="Li D."/>
            <person name="Liu D."/>
            <person name="Zhang X."/>
            <person name="Ji Z."/>
            <person name="Zhao W."/>
            <person name="Sun Y."/>
            <person name="Zhang Z."/>
            <person name="Bao J."/>
            <person name="Han Y."/>
            <person name="Dong L."/>
            <person name="Ji J."/>
            <person name="Chen P."/>
            <person name="Wu S."/>
            <person name="Liu J."/>
            <person name="Xiao Y."/>
            <person name="Bu D."/>
            <person name="Tan J."/>
            <person name="Yang L."/>
            <person name="Ye C."/>
            <person name="Zhang J."/>
            <person name="Xu J."/>
            <person name="Zhou Y."/>
            <person name="Yu Y."/>
            <person name="Zhang B."/>
            <person name="Zhuang S."/>
            <person name="Wei H."/>
            <person name="Liu B."/>
            <person name="Lei M."/>
            <person name="Yu H."/>
            <person name="Li Y."/>
            <person name="Xu H."/>
            <person name="Wei S."/>
            <person name="He X."/>
            <person name="Fang L."/>
            <person name="Zhang Z."/>
            <person name="Zhang Y."/>
            <person name="Huang X."/>
            <person name="Su Z."/>
            <person name="Tong W."/>
            <person name="Li J."/>
            <person name="Tong Z."/>
            <person name="Li S."/>
            <person name="Ye J."/>
            <person name="Wang L."/>
            <person name="Fang L."/>
            <person name="Lei T."/>
            <person name="Chen C.-S."/>
            <person name="Chen H.-C."/>
            <person name="Xu Z."/>
            <person name="Li H."/>
            <person name="Huang H."/>
            <person name="Zhang F."/>
            <person name="Xu H."/>
            <person name="Li N."/>
            <person name="Zhao C."/>
            <person name="Li S."/>
            <person name="Dong L."/>
            <person name="Huang Y."/>
            <person name="Li L."/>
            <person name="Xi Y."/>
            <person name="Qi Q."/>
            <person name="Li W."/>
            <person name="Zhang B."/>
            <person name="Hu W."/>
            <person name="Zhang Y."/>
            <person name="Tian X."/>
            <person name="Jiao Y."/>
            <person name="Liang X."/>
            <person name="Jin J."/>
            <person name="Gao L."/>
            <person name="Zheng W."/>
            <person name="Hao B."/>
            <person name="Liu S.-M."/>
            <person name="Wang W."/>
            <person name="Yuan L."/>
            <person name="Cao M."/>
            <person name="McDermott J."/>
            <person name="Samudrala R."/>
            <person name="Wang J."/>
            <person name="Wong G.K.-S."/>
            <person name="Yang H."/>
        </authorList>
    </citation>
    <scope>NUCLEOTIDE SEQUENCE [LARGE SCALE GENOMIC DNA]</scope>
    <source>
        <strain>cv. 93-11</strain>
    </source>
</reference>
<reference key="2">
    <citation type="journal article" date="2008" name="Plant Mol. Biol.">
        <title>A genome-wide survey of HD-Zip genes in rice and analysis of drought-responsive family members.</title>
        <authorList>
            <person name="Agalou A."/>
            <person name="Purwantomo S."/>
            <person name="Oevernaes E."/>
            <person name="Johannesson H."/>
            <person name="Zhu X."/>
            <person name="Estiati A."/>
            <person name="de Kam R.J."/>
            <person name="Engstroem P."/>
            <person name="Slamet-Loedin I.H."/>
            <person name="Zhu Z."/>
            <person name="Wang M."/>
            <person name="Xiong L."/>
            <person name="Meijer A.H."/>
            <person name="Ouwerkerk P.B.F."/>
        </authorList>
    </citation>
    <scope>NUCLEOTIDE SEQUENCE [MRNA] OF 100-262</scope>
    <scope>TISSUE SPECIFICITY</scope>
    <scope>GENE FAMILY</scope>
    <scope>NOMENCLATURE</scope>
    <source>
        <strain>cv. Minghui 86</strain>
    </source>
</reference>
<dbReference type="EMBL" id="CM000135">
    <property type="protein sequence ID" value="EAY78418.1"/>
    <property type="molecule type" value="Genomic_DNA"/>
</dbReference>
<dbReference type="EMBL" id="EU085431">
    <property type="protein sequence ID" value="ABU55425.1"/>
    <property type="molecule type" value="mRNA"/>
</dbReference>
<dbReference type="SMR" id="A2Z734"/>
<dbReference type="EnsemblPlants" id="BGIOSGA032882-TA">
    <property type="protein sequence ID" value="BGIOSGA032882-PA"/>
    <property type="gene ID" value="BGIOSGA032882"/>
</dbReference>
<dbReference type="Gramene" id="BGIOSGA032882-TA">
    <property type="protein sequence ID" value="BGIOSGA032882-PA"/>
    <property type="gene ID" value="BGIOSGA032882"/>
</dbReference>
<dbReference type="HOGENOM" id="CLU_060842_4_1_1"/>
<dbReference type="OMA" id="DGHHTFQ"/>
<dbReference type="Proteomes" id="UP000007015">
    <property type="component" value="Chromosome 10"/>
</dbReference>
<dbReference type="GO" id="GO:0005634">
    <property type="term" value="C:nucleus"/>
    <property type="evidence" value="ECO:0007669"/>
    <property type="project" value="UniProtKB-SubCell"/>
</dbReference>
<dbReference type="GO" id="GO:0000981">
    <property type="term" value="F:DNA-binding transcription factor activity, RNA polymerase II-specific"/>
    <property type="evidence" value="ECO:0007669"/>
    <property type="project" value="InterPro"/>
</dbReference>
<dbReference type="GO" id="GO:0043565">
    <property type="term" value="F:sequence-specific DNA binding"/>
    <property type="evidence" value="ECO:0007669"/>
    <property type="project" value="InterPro"/>
</dbReference>
<dbReference type="GO" id="GO:0045893">
    <property type="term" value="P:positive regulation of DNA-templated transcription"/>
    <property type="evidence" value="ECO:0007669"/>
    <property type="project" value="TreeGrafter"/>
</dbReference>
<dbReference type="CDD" id="cd00086">
    <property type="entry name" value="homeodomain"/>
    <property type="match status" value="1"/>
</dbReference>
<dbReference type="FunFam" id="1.10.10.60:FF:000200">
    <property type="entry name" value="Homeobox-leucine zipper protein ATHB-13"/>
    <property type="match status" value="1"/>
</dbReference>
<dbReference type="Gene3D" id="1.10.10.60">
    <property type="entry name" value="Homeodomain-like"/>
    <property type="match status" value="1"/>
</dbReference>
<dbReference type="InterPro" id="IPR001356">
    <property type="entry name" value="HD"/>
</dbReference>
<dbReference type="InterPro" id="IPR045224">
    <property type="entry name" value="HDZip_class_I_plant"/>
</dbReference>
<dbReference type="InterPro" id="IPR017970">
    <property type="entry name" value="Homeobox_CS"/>
</dbReference>
<dbReference type="InterPro" id="IPR009057">
    <property type="entry name" value="Homeodomain-like_sf"/>
</dbReference>
<dbReference type="InterPro" id="IPR000047">
    <property type="entry name" value="HTH_motif"/>
</dbReference>
<dbReference type="InterPro" id="IPR003106">
    <property type="entry name" value="Leu_zip_homeo"/>
</dbReference>
<dbReference type="PANTHER" id="PTHR24326">
    <property type="entry name" value="HOMEOBOX-LEUCINE ZIPPER PROTEIN"/>
    <property type="match status" value="1"/>
</dbReference>
<dbReference type="PANTHER" id="PTHR24326:SF225">
    <property type="entry name" value="HOMEOBOX-LEUCINE ZIPPER PROTEIN HOX23"/>
    <property type="match status" value="1"/>
</dbReference>
<dbReference type="Pfam" id="PF02183">
    <property type="entry name" value="HALZ"/>
    <property type="match status" value="1"/>
</dbReference>
<dbReference type="Pfam" id="PF00046">
    <property type="entry name" value="Homeodomain"/>
    <property type="match status" value="1"/>
</dbReference>
<dbReference type="PRINTS" id="PR00031">
    <property type="entry name" value="HTHREPRESSR"/>
</dbReference>
<dbReference type="SMART" id="SM00389">
    <property type="entry name" value="HOX"/>
    <property type="match status" value="1"/>
</dbReference>
<dbReference type="SUPFAM" id="SSF46689">
    <property type="entry name" value="Homeodomain-like"/>
    <property type="match status" value="1"/>
</dbReference>
<dbReference type="PROSITE" id="PS00027">
    <property type="entry name" value="HOMEOBOX_1"/>
    <property type="match status" value="1"/>
</dbReference>
<dbReference type="PROSITE" id="PS50071">
    <property type="entry name" value="HOMEOBOX_2"/>
    <property type="match status" value="1"/>
</dbReference>
<keyword id="KW-0238">DNA-binding</keyword>
<keyword id="KW-0371">Homeobox</keyword>
<keyword id="KW-0539">Nucleus</keyword>
<keyword id="KW-1185">Reference proteome</keyword>
<keyword id="KW-0804">Transcription</keyword>
<keyword id="KW-0805">Transcription regulation</keyword>
<proteinExistence type="evidence at transcript level"/>
<feature type="chain" id="PRO_0000331718" description="Homeobox-leucine zipper protein HOX23">
    <location>
        <begin position="1"/>
        <end position="351"/>
    </location>
</feature>
<feature type="DNA-binding region" description="Homeobox" evidence="2">
    <location>
        <begin position="101"/>
        <end position="160"/>
    </location>
</feature>
<feature type="region of interest" description="Disordered" evidence="3">
    <location>
        <begin position="34"/>
        <end position="128"/>
    </location>
</feature>
<feature type="region of interest" description="Leucine-zipper">
    <location>
        <begin position="159"/>
        <end position="203"/>
    </location>
</feature>
<feature type="region of interest" description="Disordered" evidence="3">
    <location>
        <begin position="227"/>
        <end position="263"/>
    </location>
</feature>
<feature type="compositionally biased region" description="Low complexity" evidence="3">
    <location>
        <begin position="56"/>
        <end position="65"/>
    </location>
</feature>
<feature type="compositionally biased region" description="Basic and acidic residues" evidence="3">
    <location>
        <begin position="114"/>
        <end position="128"/>
    </location>
</feature>
<feature type="compositionally biased region" description="Polar residues" evidence="3">
    <location>
        <begin position="228"/>
        <end position="240"/>
    </location>
</feature>
<feature type="compositionally biased region" description="Pro residues" evidence="3">
    <location>
        <begin position="247"/>
        <end position="257"/>
    </location>
</feature>
<feature type="sequence conflict" description="In Ref. 2; ABU55425." evidence="5" ref="2">
    <original>P</original>
    <variation>L</variation>
    <location>
        <position position="255"/>
    </location>
</feature>
<protein>
    <recommendedName>
        <fullName>Homeobox-leucine zipper protein HOX23</fullName>
    </recommendedName>
    <alternativeName>
        <fullName>HD-ZIP protein HOX23</fullName>
    </alternativeName>
    <alternativeName>
        <fullName>Homeodomain transcription factor HOX23</fullName>
    </alternativeName>
    <alternativeName>
        <fullName>OsHox23</fullName>
    </alternativeName>
</protein>